<accession>O55743</accession>
<protein>
    <recommendedName>
        <fullName>Uncharacterized protein 137R</fullName>
    </recommendedName>
</protein>
<keyword id="KW-0175">Coiled coil</keyword>
<keyword id="KW-1185">Reference proteome</keyword>
<keyword id="KW-0732">Signal</keyword>
<gene>
    <name type="ORF">IIV6-137R</name>
</gene>
<organismHost>
    <name type="scientific">Acheta domesticus</name>
    <name type="common">House cricket</name>
    <dbReference type="NCBI Taxonomy" id="6997"/>
</organismHost>
<organismHost>
    <name type="scientific">Chilo suppressalis</name>
    <name type="common">Asiatic rice borer moth</name>
    <dbReference type="NCBI Taxonomy" id="168631"/>
</organismHost>
<organismHost>
    <name type="scientific">Gryllus bimaculatus</name>
    <name type="common">Two-spotted cricket</name>
    <dbReference type="NCBI Taxonomy" id="6999"/>
</organismHost>
<organismHost>
    <name type="scientific">Gryllus campestris</name>
    <dbReference type="NCBI Taxonomy" id="58607"/>
</organismHost>
<organismHost>
    <name type="scientific">Spodoptera frugiperda</name>
    <name type="common">Fall armyworm</name>
    <dbReference type="NCBI Taxonomy" id="7108"/>
</organismHost>
<name>137R_IIV6</name>
<sequence>MNEIIITIIVLILLLFITLSRNDRNNNQSNNGKKEKLIKCKKEVQQLRQKLDQLTFQ</sequence>
<evidence type="ECO:0000255" key="1"/>
<proteinExistence type="inferred from homology"/>
<dbReference type="EMBL" id="AF303741">
    <property type="protein sequence ID" value="AAB94454.1"/>
    <property type="molecule type" value="Genomic_DNA"/>
</dbReference>
<dbReference type="PIR" id="T03080">
    <property type="entry name" value="T03080"/>
</dbReference>
<dbReference type="RefSeq" id="NP_149600.1">
    <property type="nucleotide sequence ID" value="NC_003038.1"/>
</dbReference>
<dbReference type="SMR" id="O55743"/>
<dbReference type="KEGG" id="vg:1733001"/>
<dbReference type="Proteomes" id="UP000001359">
    <property type="component" value="Genome"/>
</dbReference>
<organism>
    <name type="scientific">Invertebrate iridescent virus 6</name>
    <name type="common">IIV-6</name>
    <name type="synonym">Chilo iridescent virus</name>
    <dbReference type="NCBI Taxonomy" id="176652"/>
    <lineage>
        <taxon>Viruses</taxon>
        <taxon>Varidnaviria</taxon>
        <taxon>Bamfordvirae</taxon>
        <taxon>Nucleocytoviricota</taxon>
        <taxon>Megaviricetes</taxon>
        <taxon>Pimascovirales</taxon>
        <taxon>Iridoviridae</taxon>
        <taxon>Betairidovirinae</taxon>
        <taxon>Iridovirus</taxon>
    </lineage>
</organism>
<reference key="1">
    <citation type="journal article" date="2001" name="Virology">
        <title>Analysis of the first complete DNA sequence of an invertebrate iridovirus: coding strategy of the genome of Chilo iridescent virus.</title>
        <authorList>
            <person name="Jakob N.J."/>
            <person name="Mueller K."/>
            <person name="Bahr U."/>
            <person name="Darai G."/>
        </authorList>
    </citation>
    <scope>NUCLEOTIDE SEQUENCE [LARGE SCALE GENOMIC DNA]</scope>
</reference>
<reference key="2">
    <citation type="journal article" date="2007" name="Virol. J.">
        <title>Comparative genomic analysis of the family Iridoviridae: re-annotating and defining the core set of iridovirus genes.</title>
        <authorList>
            <person name="Eaton H.E."/>
            <person name="Metcalf J."/>
            <person name="Penny E."/>
            <person name="Tcherepanov V."/>
            <person name="Upton C."/>
            <person name="Brunetti C.R."/>
        </authorList>
    </citation>
    <scope>GENOME REANNOTATION</scope>
</reference>
<feature type="signal peptide" evidence="1">
    <location>
        <begin position="1"/>
        <end position="22"/>
    </location>
</feature>
<feature type="chain" id="PRO_0000378006" description="Uncharacterized protein 137R">
    <location>
        <begin position="23"/>
        <end position="57"/>
    </location>
</feature>
<feature type="coiled-coil region" evidence="1">
    <location>
        <begin position="26"/>
        <end position="57"/>
    </location>
</feature>